<reference key="1">
    <citation type="journal article" date="2000" name="Nature">
        <title>Sequence and analysis of chromosome 1 of the plant Arabidopsis thaliana.</title>
        <authorList>
            <person name="Theologis A."/>
            <person name="Ecker J.R."/>
            <person name="Palm C.J."/>
            <person name="Federspiel N.A."/>
            <person name="Kaul S."/>
            <person name="White O."/>
            <person name="Alonso J."/>
            <person name="Altafi H."/>
            <person name="Araujo R."/>
            <person name="Bowman C.L."/>
            <person name="Brooks S.Y."/>
            <person name="Buehler E."/>
            <person name="Chan A."/>
            <person name="Chao Q."/>
            <person name="Chen H."/>
            <person name="Cheuk R.F."/>
            <person name="Chin C.W."/>
            <person name="Chung M.K."/>
            <person name="Conn L."/>
            <person name="Conway A.B."/>
            <person name="Conway A.R."/>
            <person name="Creasy T.H."/>
            <person name="Dewar K."/>
            <person name="Dunn P."/>
            <person name="Etgu P."/>
            <person name="Feldblyum T.V."/>
            <person name="Feng J.-D."/>
            <person name="Fong B."/>
            <person name="Fujii C.Y."/>
            <person name="Gill J.E."/>
            <person name="Goldsmith A.D."/>
            <person name="Haas B."/>
            <person name="Hansen N.F."/>
            <person name="Hughes B."/>
            <person name="Huizar L."/>
            <person name="Hunter J.L."/>
            <person name="Jenkins J."/>
            <person name="Johnson-Hopson C."/>
            <person name="Khan S."/>
            <person name="Khaykin E."/>
            <person name="Kim C.J."/>
            <person name="Koo H.L."/>
            <person name="Kremenetskaia I."/>
            <person name="Kurtz D.B."/>
            <person name="Kwan A."/>
            <person name="Lam B."/>
            <person name="Langin-Hooper S."/>
            <person name="Lee A."/>
            <person name="Lee J.M."/>
            <person name="Lenz C.A."/>
            <person name="Li J.H."/>
            <person name="Li Y.-P."/>
            <person name="Lin X."/>
            <person name="Liu S.X."/>
            <person name="Liu Z.A."/>
            <person name="Luros J.S."/>
            <person name="Maiti R."/>
            <person name="Marziali A."/>
            <person name="Militscher J."/>
            <person name="Miranda M."/>
            <person name="Nguyen M."/>
            <person name="Nierman W.C."/>
            <person name="Osborne B.I."/>
            <person name="Pai G."/>
            <person name="Peterson J."/>
            <person name="Pham P.K."/>
            <person name="Rizzo M."/>
            <person name="Rooney T."/>
            <person name="Rowley D."/>
            <person name="Sakano H."/>
            <person name="Salzberg S.L."/>
            <person name="Schwartz J.R."/>
            <person name="Shinn P."/>
            <person name="Southwick A.M."/>
            <person name="Sun H."/>
            <person name="Tallon L.J."/>
            <person name="Tambunga G."/>
            <person name="Toriumi M.J."/>
            <person name="Town C.D."/>
            <person name="Utterback T."/>
            <person name="Van Aken S."/>
            <person name="Vaysberg M."/>
            <person name="Vysotskaia V.S."/>
            <person name="Walker M."/>
            <person name="Wu D."/>
            <person name="Yu G."/>
            <person name="Fraser C.M."/>
            <person name="Venter J.C."/>
            <person name="Davis R.W."/>
        </authorList>
    </citation>
    <scope>NUCLEOTIDE SEQUENCE [LARGE SCALE GENOMIC DNA]</scope>
    <source>
        <strain>cv. Columbia</strain>
    </source>
</reference>
<reference key="2">
    <citation type="journal article" date="2017" name="Plant J.">
        <title>Araport11: a complete reannotation of the Arabidopsis thaliana reference genome.</title>
        <authorList>
            <person name="Cheng C.Y."/>
            <person name="Krishnakumar V."/>
            <person name="Chan A.P."/>
            <person name="Thibaud-Nissen F."/>
            <person name="Schobel S."/>
            <person name="Town C.D."/>
        </authorList>
    </citation>
    <scope>GENOME REANNOTATION</scope>
    <source>
        <strain>cv. Columbia</strain>
    </source>
</reference>
<reference key="3">
    <citation type="journal article" date="2002" name="Science">
        <title>Functional annotation of a full-length Arabidopsis cDNA collection.</title>
        <authorList>
            <person name="Seki M."/>
            <person name="Narusaka M."/>
            <person name="Kamiya A."/>
            <person name="Ishida J."/>
            <person name="Satou M."/>
            <person name="Sakurai T."/>
            <person name="Nakajima M."/>
            <person name="Enju A."/>
            <person name="Akiyama K."/>
            <person name="Oono Y."/>
            <person name="Muramatsu M."/>
            <person name="Hayashizaki Y."/>
            <person name="Kawai J."/>
            <person name="Carninci P."/>
            <person name="Itoh M."/>
            <person name="Ishii Y."/>
            <person name="Arakawa T."/>
            <person name="Shibata K."/>
            <person name="Shinagawa A."/>
            <person name="Shinozaki K."/>
        </authorList>
    </citation>
    <scope>NUCLEOTIDE SEQUENCE [LARGE SCALE MRNA] (ISOFORM 1)</scope>
    <source>
        <strain>cv. Columbia</strain>
    </source>
</reference>
<reference key="4">
    <citation type="journal article" date="2003" name="Science">
        <title>Empirical analysis of transcriptional activity in the Arabidopsis genome.</title>
        <authorList>
            <person name="Yamada K."/>
            <person name="Lim J."/>
            <person name="Dale J.M."/>
            <person name="Chen H."/>
            <person name="Shinn P."/>
            <person name="Palm C.J."/>
            <person name="Southwick A.M."/>
            <person name="Wu H.C."/>
            <person name="Kim C.J."/>
            <person name="Nguyen M."/>
            <person name="Pham P.K."/>
            <person name="Cheuk R.F."/>
            <person name="Karlin-Newmann G."/>
            <person name="Liu S.X."/>
            <person name="Lam B."/>
            <person name="Sakano H."/>
            <person name="Wu T."/>
            <person name="Yu G."/>
            <person name="Miranda M."/>
            <person name="Quach H.L."/>
            <person name="Tripp M."/>
            <person name="Chang C.H."/>
            <person name="Lee J.M."/>
            <person name="Toriumi M.J."/>
            <person name="Chan M.M."/>
            <person name="Tang C.C."/>
            <person name="Onodera C.S."/>
            <person name="Deng J.M."/>
            <person name="Akiyama K."/>
            <person name="Ansari Y."/>
            <person name="Arakawa T."/>
            <person name="Banh J."/>
            <person name="Banno F."/>
            <person name="Bowser L."/>
            <person name="Brooks S.Y."/>
            <person name="Carninci P."/>
            <person name="Chao Q."/>
            <person name="Choy N."/>
            <person name="Enju A."/>
            <person name="Goldsmith A.D."/>
            <person name="Gurjal M."/>
            <person name="Hansen N.F."/>
            <person name="Hayashizaki Y."/>
            <person name="Johnson-Hopson C."/>
            <person name="Hsuan V.W."/>
            <person name="Iida K."/>
            <person name="Karnes M."/>
            <person name="Khan S."/>
            <person name="Koesema E."/>
            <person name="Ishida J."/>
            <person name="Jiang P.X."/>
            <person name="Jones T."/>
            <person name="Kawai J."/>
            <person name="Kamiya A."/>
            <person name="Meyers C."/>
            <person name="Nakajima M."/>
            <person name="Narusaka M."/>
            <person name="Seki M."/>
            <person name="Sakurai T."/>
            <person name="Satou M."/>
            <person name="Tamse R."/>
            <person name="Vaysberg M."/>
            <person name="Wallender E.K."/>
            <person name="Wong C."/>
            <person name="Yamamura Y."/>
            <person name="Yuan S."/>
            <person name="Shinozaki K."/>
            <person name="Davis R.W."/>
            <person name="Theologis A."/>
            <person name="Ecker J.R."/>
        </authorList>
    </citation>
    <scope>NUCLEOTIDE SEQUENCE [LARGE SCALE MRNA] (ISOFORM 1)</scope>
    <source>
        <strain>cv. Columbia</strain>
    </source>
</reference>
<reference key="5">
    <citation type="journal article" date="2004" name="Plant Physiol.">
        <title>Genome-wide ORFeome cloning and analysis of Arabidopsis transcription factor genes.</title>
        <authorList>
            <person name="Gong W."/>
            <person name="Shen Y.-P."/>
            <person name="Ma L.-G."/>
            <person name="Pan Y."/>
            <person name="Du Y.-L."/>
            <person name="Wang D.-H."/>
            <person name="Yang J.-Y."/>
            <person name="Hu L.-D."/>
            <person name="Liu X.-F."/>
            <person name="Dong C.-X."/>
            <person name="Ma L."/>
            <person name="Chen Y.-H."/>
            <person name="Yang X.-Y."/>
            <person name="Gao Y."/>
            <person name="Zhu D."/>
            <person name="Tan X."/>
            <person name="Mu J.-Y."/>
            <person name="Zhang D.-B."/>
            <person name="Liu Y.-L."/>
            <person name="Dinesh-Kumar S.P."/>
            <person name="Li Y."/>
            <person name="Wang X.-P."/>
            <person name="Gu H.-Y."/>
            <person name="Qu L.-J."/>
            <person name="Bai S.-N."/>
            <person name="Lu Y.-T."/>
            <person name="Li J.-Y."/>
            <person name="Zhao J.-D."/>
            <person name="Zuo J."/>
            <person name="Huang H."/>
            <person name="Deng X.-W."/>
            <person name="Zhu Y.-X."/>
        </authorList>
    </citation>
    <scope>NUCLEOTIDE SEQUENCE [LARGE SCALE MRNA] (ISOFORM 2)</scope>
    <source>
        <strain>cv. Columbia</strain>
    </source>
</reference>
<reference key="6">
    <citation type="journal article" date="2003" name="Mol. Biol. Evol.">
        <title>The basic helix-loop-helix transcription factor family in plants: a genome-wide study of protein structure and functional diversity.</title>
        <authorList>
            <person name="Heim M.A."/>
            <person name="Jakoby M."/>
            <person name="Werber M."/>
            <person name="Martin C."/>
            <person name="Weisshaar B."/>
            <person name="Bailey P.C."/>
        </authorList>
    </citation>
    <scope>NUCLEOTIDE SEQUENCE [MRNA] OF 248-390 (ISOFORMS 1/2)</scope>
    <scope>TISSUE SPECIFICITY</scope>
    <scope>GENE FAMILY</scope>
    <scope>NOMENCLATURE</scope>
    <source>
        <strain>cv. Columbia</strain>
    </source>
</reference>
<reference key="7">
    <citation type="journal article" date="2003" name="Plant Cell">
        <title>The Arabidopsis basic/helix-loop-helix transcription factor family.</title>
        <authorList>
            <person name="Toledo-Ortiz G."/>
            <person name="Huq E."/>
            <person name="Quail P.H."/>
        </authorList>
    </citation>
    <scope>GENE FAMILY</scope>
</reference>
<reference key="8">
    <citation type="journal article" date="2003" name="Plant Cell">
        <title>Update on the basic helix-loop-helix transcription factor gene family in Arabidopsis thaliana.</title>
        <authorList>
            <person name="Bailey P.C."/>
            <person name="Martin C."/>
            <person name="Toledo-Ortiz G."/>
            <person name="Quail P.H."/>
            <person name="Huq E."/>
            <person name="Heim M.A."/>
            <person name="Jakoby M."/>
            <person name="Werber M."/>
            <person name="Weisshaar B."/>
        </authorList>
    </citation>
    <scope>GENE FAMILY</scope>
    <scope>NOMENCLATURE</scope>
</reference>
<reference key="9">
    <citation type="journal article" date="2012" name="Plant Cell">
        <title>A triantagonistic basic helix-loop-helix system regulates cell elongation in Arabidopsis.</title>
        <authorList>
            <person name="Ikeda M."/>
            <person name="Fujiwara S."/>
            <person name="Mitsuda N."/>
            <person name="Ohme-Takagi M."/>
        </authorList>
    </citation>
    <scope>FUNCTION</scope>
    <scope>INTERACTION WITH IBH1</scope>
</reference>
<reference key="10">
    <citation type="journal article" date="2013" name="PLoS Genet.">
        <title>Multiple bHLH proteins form heterodimers to mediate CRY2-dependent regulation of flowering-time in Arabidopsis.</title>
        <authorList>
            <person name="Liu Y."/>
            <person name="Li X."/>
            <person name="Li K."/>
            <person name="Liu H."/>
            <person name="Lin C."/>
        </authorList>
    </citation>
    <scope>FUNCTION</scope>
    <scope>INTERACTION WITH CRY2</scope>
</reference>
<keyword id="KW-0025">Alternative splicing</keyword>
<keyword id="KW-0238">DNA-binding</keyword>
<keyword id="KW-0341">Growth regulation</keyword>
<keyword id="KW-0539">Nucleus</keyword>
<keyword id="KW-1185">Reference proteome</keyword>
<keyword id="KW-0804">Transcription</keyword>
<keyword id="KW-0805">Transcription regulation</keyword>
<feature type="chain" id="PRO_0000358768" description="Transcription factor bHLH76">
    <location>
        <begin position="1"/>
        <end position="390"/>
    </location>
</feature>
<feature type="domain" description="bHLH" evidence="1">
    <location>
        <begin position="229"/>
        <end position="279"/>
    </location>
</feature>
<feature type="region of interest" description="Disordered" evidence="2">
    <location>
        <begin position="147"/>
        <end position="217"/>
    </location>
</feature>
<feature type="compositionally biased region" description="Basic and acidic residues" evidence="2">
    <location>
        <begin position="207"/>
        <end position="217"/>
    </location>
</feature>
<feature type="splice variant" id="VSP_036091" description="In isoform 2." evidence="6">
    <location>
        <begin position="60"/>
        <end position="110"/>
    </location>
</feature>
<proteinExistence type="evidence at protein level"/>
<name>BH076_ARATH</name>
<organism>
    <name type="scientific">Arabidopsis thaliana</name>
    <name type="common">Mouse-ear cress</name>
    <dbReference type="NCBI Taxonomy" id="3702"/>
    <lineage>
        <taxon>Eukaryota</taxon>
        <taxon>Viridiplantae</taxon>
        <taxon>Streptophyta</taxon>
        <taxon>Embryophyta</taxon>
        <taxon>Tracheophyta</taxon>
        <taxon>Spermatophyta</taxon>
        <taxon>Magnoliopsida</taxon>
        <taxon>eudicotyledons</taxon>
        <taxon>Gunneridae</taxon>
        <taxon>Pentapetalae</taxon>
        <taxon>rosids</taxon>
        <taxon>malvids</taxon>
        <taxon>Brassicales</taxon>
        <taxon>Brassicaceae</taxon>
        <taxon>Camelineae</taxon>
        <taxon>Arabidopsis</taxon>
    </lineage>
</organism>
<evidence type="ECO:0000255" key="1">
    <source>
        <dbReference type="PROSITE-ProRule" id="PRU00981"/>
    </source>
</evidence>
<evidence type="ECO:0000256" key="2">
    <source>
        <dbReference type="SAM" id="MobiDB-lite"/>
    </source>
</evidence>
<evidence type="ECO:0000269" key="3">
    <source>
    </source>
</evidence>
<evidence type="ECO:0000269" key="4">
    <source>
    </source>
</evidence>
<evidence type="ECO:0000269" key="5">
    <source>
    </source>
</evidence>
<evidence type="ECO:0000303" key="6">
    <source>
    </source>
</evidence>
<evidence type="ECO:0000305" key="7"/>
<evidence type="ECO:0000305" key="8">
    <source>
    </source>
</evidence>
<gene>
    <name type="primary">BHLH76</name>
    <name type="synonym">CIB5</name>
    <name type="synonym">EN83</name>
    <name type="ordered locus">At1g26260</name>
    <name type="ORF">F28B23.8</name>
</gene>
<accession>Q9C670</accession>
<accession>Q700E2</accession>
<sequence>MSDKDEFAAKKKDLVNTPVDLYPPENPMLGPSPMMDSFRETLWHDGGFNVHTDADTSFRGNNNIDIPLEMGWNMAQFPADSGFIERAAKFSFFGCGEMMMNQQQSSLGVPDSTGLFLQDTQIPSGSKLDNGPLTDASKLVKERSINNVSEDSQSSGGNGHDDAKCGQTSSKGFSSKKRKRIGKDCEEEEDKKQKDEQSPTSNANKTNSEKQPSDSLKDGYIHMRARRGQATNSHSLAERVRREKISERMKFLQDLVPGCDKVTGKAVMLDEIINYVQSLQCQIEFLSMKLSAVNPVLDFNLESLLAKDALQSSAPTFPHNMSMLYPPVSYLSQTGFMQPNISSMSLLSGGLKRQETHGYESDHHNLVHMNHETGTAPDHEDTTADMKVEP</sequence>
<dbReference type="EMBL" id="AC079829">
    <property type="protein sequence ID" value="AAG50678.1"/>
    <property type="molecule type" value="Genomic_DNA"/>
</dbReference>
<dbReference type="EMBL" id="CP002684">
    <property type="protein sequence ID" value="AEE30667.1"/>
    <property type="molecule type" value="Genomic_DNA"/>
</dbReference>
<dbReference type="EMBL" id="CP002684">
    <property type="protein sequence ID" value="AEE30668.1"/>
    <property type="molecule type" value="Genomic_DNA"/>
</dbReference>
<dbReference type="EMBL" id="CP002684">
    <property type="protein sequence ID" value="AEE30669.1"/>
    <property type="molecule type" value="Genomic_DNA"/>
</dbReference>
<dbReference type="EMBL" id="CP002684">
    <property type="protein sequence ID" value="ANM60813.1"/>
    <property type="molecule type" value="Genomic_DNA"/>
</dbReference>
<dbReference type="EMBL" id="CP002684">
    <property type="protein sequence ID" value="ANM60815.1"/>
    <property type="molecule type" value="Genomic_DNA"/>
</dbReference>
<dbReference type="EMBL" id="AK117355">
    <property type="protein sequence ID" value="BAC42025.1"/>
    <property type="molecule type" value="mRNA"/>
</dbReference>
<dbReference type="EMBL" id="BT005334">
    <property type="protein sequence ID" value="AAO63398.1"/>
    <property type="molecule type" value="mRNA"/>
</dbReference>
<dbReference type="EMBL" id="AJ630483">
    <property type="protein sequence ID" value="CAG25856.1"/>
    <property type="molecule type" value="mRNA"/>
</dbReference>
<dbReference type="EMBL" id="AY568655">
    <property type="protein sequence ID" value="AAS79545.1"/>
    <property type="molecule type" value="mRNA"/>
</dbReference>
<dbReference type="EMBL" id="AF488608">
    <property type="status" value="NOT_ANNOTATED_CDS"/>
    <property type="molecule type" value="mRNA"/>
</dbReference>
<dbReference type="PIR" id="H86388">
    <property type="entry name" value="H86388"/>
</dbReference>
<dbReference type="RefSeq" id="NP_001031093.1">
    <molecule id="Q9C670-2"/>
    <property type="nucleotide sequence ID" value="NM_001036016.2"/>
</dbReference>
<dbReference type="RefSeq" id="NP_001323071.1">
    <molecule id="Q9C670-1"/>
    <property type="nucleotide sequence ID" value="NM_001332707.1"/>
</dbReference>
<dbReference type="RefSeq" id="NP_001323073.1">
    <molecule id="Q9C670-1"/>
    <property type="nucleotide sequence ID" value="NM_001332709.1"/>
</dbReference>
<dbReference type="RefSeq" id="NP_173950.1">
    <molecule id="Q9C670-1"/>
    <property type="nucleotide sequence ID" value="NM_102390.3"/>
</dbReference>
<dbReference type="RefSeq" id="NP_973913.1">
    <molecule id="Q9C670-1"/>
    <property type="nucleotide sequence ID" value="NM_202184.3"/>
</dbReference>
<dbReference type="SMR" id="Q9C670"/>
<dbReference type="BioGRID" id="24404">
    <property type="interactions" value="14"/>
</dbReference>
<dbReference type="FunCoup" id="Q9C670">
    <property type="interactions" value="37"/>
</dbReference>
<dbReference type="IntAct" id="Q9C670">
    <property type="interactions" value="10"/>
</dbReference>
<dbReference type="STRING" id="3702.Q9C670"/>
<dbReference type="PaxDb" id="3702-AT1G26260.1"/>
<dbReference type="EnsemblPlants" id="AT1G26260.1">
    <molecule id="Q9C670-1"/>
    <property type="protein sequence ID" value="AT1G26260.1"/>
    <property type="gene ID" value="AT1G26260"/>
</dbReference>
<dbReference type="EnsemblPlants" id="AT1G26260.2">
    <molecule id="Q9C670-1"/>
    <property type="protein sequence ID" value="AT1G26260.2"/>
    <property type="gene ID" value="AT1G26260"/>
</dbReference>
<dbReference type="EnsemblPlants" id="AT1G26260.3">
    <molecule id="Q9C670-2"/>
    <property type="protein sequence ID" value="AT1G26260.3"/>
    <property type="gene ID" value="AT1G26260"/>
</dbReference>
<dbReference type="EnsemblPlants" id="AT1G26260.4">
    <molecule id="Q9C670-1"/>
    <property type="protein sequence ID" value="AT1G26260.4"/>
    <property type="gene ID" value="AT1G26260"/>
</dbReference>
<dbReference type="EnsemblPlants" id="AT1G26260.6">
    <molecule id="Q9C670-1"/>
    <property type="protein sequence ID" value="AT1G26260.6"/>
    <property type="gene ID" value="AT1G26260"/>
</dbReference>
<dbReference type="GeneID" id="839167"/>
<dbReference type="Gramene" id="AT1G26260.1">
    <molecule id="Q9C670-1"/>
    <property type="protein sequence ID" value="AT1G26260.1"/>
    <property type="gene ID" value="AT1G26260"/>
</dbReference>
<dbReference type="Gramene" id="AT1G26260.2">
    <molecule id="Q9C670-1"/>
    <property type="protein sequence ID" value="AT1G26260.2"/>
    <property type="gene ID" value="AT1G26260"/>
</dbReference>
<dbReference type="Gramene" id="AT1G26260.3">
    <molecule id="Q9C670-2"/>
    <property type="protein sequence ID" value="AT1G26260.3"/>
    <property type="gene ID" value="AT1G26260"/>
</dbReference>
<dbReference type="Gramene" id="AT1G26260.4">
    <molecule id="Q9C670-1"/>
    <property type="protein sequence ID" value="AT1G26260.4"/>
    <property type="gene ID" value="AT1G26260"/>
</dbReference>
<dbReference type="Gramene" id="AT1G26260.6">
    <molecule id="Q9C670-1"/>
    <property type="protein sequence ID" value="AT1G26260.6"/>
    <property type="gene ID" value="AT1G26260"/>
</dbReference>
<dbReference type="KEGG" id="ath:AT1G26260"/>
<dbReference type="Araport" id="AT1G26260"/>
<dbReference type="TAIR" id="AT1G26260">
    <property type="gene designation" value="CIB5"/>
</dbReference>
<dbReference type="eggNOG" id="ENOG502QT8I">
    <property type="taxonomic scope" value="Eukaryota"/>
</dbReference>
<dbReference type="InParanoid" id="Q9C670"/>
<dbReference type="OMA" id="PSICQSS"/>
<dbReference type="PhylomeDB" id="Q9C670"/>
<dbReference type="PRO" id="PR:Q9C670"/>
<dbReference type="Proteomes" id="UP000006548">
    <property type="component" value="Chromosome 1"/>
</dbReference>
<dbReference type="ExpressionAtlas" id="Q9C670">
    <property type="expression patterns" value="baseline and differential"/>
</dbReference>
<dbReference type="GO" id="GO:0005634">
    <property type="term" value="C:nucleus"/>
    <property type="evidence" value="ECO:0007669"/>
    <property type="project" value="UniProtKB-SubCell"/>
</dbReference>
<dbReference type="GO" id="GO:0003677">
    <property type="term" value="F:DNA binding"/>
    <property type="evidence" value="ECO:0007669"/>
    <property type="project" value="UniProtKB-KW"/>
</dbReference>
<dbReference type="GO" id="GO:0003700">
    <property type="term" value="F:DNA-binding transcription factor activity"/>
    <property type="evidence" value="ECO:0000250"/>
    <property type="project" value="TAIR"/>
</dbReference>
<dbReference type="GO" id="GO:0046983">
    <property type="term" value="F:protein dimerization activity"/>
    <property type="evidence" value="ECO:0007669"/>
    <property type="project" value="InterPro"/>
</dbReference>
<dbReference type="GO" id="GO:0009911">
    <property type="term" value="P:positive regulation of flower development"/>
    <property type="evidence" value="ECO:0000316"/>
    <property type="project" value="TAIR"/>
</dbReference>
<dbReference type="GO" id="GO:0006355">
    <property type="term" value="P:regulation of DNA-templated transcription"/>
    <property type="evidence" value="ECO:0000304"/>
    <property type="project" value="TAIR"/>
</dbReference>
<dbReference type="GO" id="GO:0009637">
    <property type="term" value="P:response to blue light"/>
    <property type="evidence" value="ECO:0000314"/>
    <property type="project" value="UniProtKB"/>
</dbReference>
<dbReference type="CDD" id="cd18919">
    <property type="entry name" value="bHLH_AtBPE_like"/>
    <property type="match status" value="1"/>
</dbReference>
<dbReference type="FunFam" id="4.10.280.10:FF:000002">
    <property type="entry name" value="Basic helix-loop-helix transcription factor"/>
    <property type="match status" value="1"/>
</dbReference>
<dbReference type="Gene3D" id="4.10.280.10">
    <property type="entry name" value="Helix-loop-helix DNA-binding domain"/>
    <property type="match status" value="1"/>
</dbReference>
<dbReference type="InterPro" id="IPR011598">
    <property type="entry name" value="bHLH_dom"/>
</dbReference>
<dbReference type="InterPro" id="IPR024097">
    <property type="entry name" value="bHLH_ZIP_TF"/>
</dbReference>
<dbReference type="InterPro" id="IPR036638">
    <property type="entry name" value="HLH_DNA-bd_sf"/>
</dbReference>
<dbReference type="PANTHER" id="PTHR12565">
    <property type="entry name" value="STEROL REGULATORY ELEMENT-BINDING PROTEIN"/>
    <property type="match status" value="1"/>
</dbReference>
<dbReference type="PANTHER" id="PTHR12565:SF444">
    <property type="entry name" value="TRANSCRIPTION FACTOR BHLH62-RELATED"/>
    <property type="match status" value="1"/>
</dbReference>
<dbReference type="Pfam" id="PF00010">
    <property type="entry name" value="HLH"/>
    <property type="match status" value="1"/>
</dbReference>
<dbReference type="SMART" id="SM00353">
    <property type="entry name" value="HLH"/>
    <property type="match status" value="1"/>
</dbReference>
<dbReference type="SUPFAM" id="SSF47459">
    <property type="entry name" value="HLH, helix-loop-helix DNA-binding domain"/>
    <property type="match status" value="1"/>
</dbReference>
<dbReference type="PROSITE" id="PS50888">
    <property type="entry name" value="BHLH"/>
    <property type="match status" value="1"/>
</dbReference>
<comment type="function">
    <text evidence="4 5">Transcriptional activator involved in cell elongation. Regulates the expression of a subset of genes involved in cell expansion by binding to the G-box motif. Binds to chromatin DNA of the FT gene and promotes its expression, and thus triggers flowering in response to blue light (PubMed:24130508).</text>
</comment>
<comment type="subunit">
    <text evidence="4 5 7">Homodimer (Probable). Interacts with IBH1. Binds reversibly to CRY2 after blue light illumination (PubMed:24130508).</text>
</comment>
<comment type="subcellular location">
    <subcellularLocation>
        <location evidence="1">Nucleus</location>
    </subcellularLocation>
</comment>
<comment type="alternative products">
    <event type="alternative splicing"/>
    <isoform>
        <id>Q9C670-1</id>
        <name>1</name>
        <sequence type="displayed"/>
    </isoform>
    <isoform>
        <id>Q9C670-2</id>
        <name>2</name>
        <sequence type="described" ref="VSP_036091"/>
    </isoform>
</comment>
<comment type="tissue specificity">
    <text evidence="3">Expressed constitutively in roots, leaves, stems, and flowers.</text>
</comment>
<comment type="miscellaneous">
    <text evidence="8">Plants over-expressing CIB5 show increased hypocotyl and cotyledon lengths and increased flower size.</text>
</comment>
<protein>
    <recommendedName>
        <fullName>Transcription factor bHLH76</fullName>
    </recommendedName>
    <alternativeName>
        <fullName>Basic helix-loop-helix protein 76</fullName>
        <shortName>AtbHLH76</shortName>
        <shortName>bHLH 76</shortName>
    </alternativeName>
    <alternativeName>
        <fullName>Protein CRYPTOCHROME INTERACTING BASIC-HELIX-LOOP-HELIX 5</fullName>
    </alternativeName>
    <alternativeName>
        <fullName>Transcription factor EN 83</fullName>
    </alternativeName>
    <alternativeName>
        <fullName>bHLH transcription factor bHLH076</fullName>
    </alternativeName>
</protein>